<evidence type="ECO:0000255" key="1">
    <source>
        <dbReference type="HAMAP-Rule" id="MF_00226"/>
    </source>
</evidence>
<proteinExistence type="inferred from homology"/>
<feature type="chain" id="PRO_1000058688" description="Putative competence-damage inducible protein">
    <location>
        <begin position="1"/>
        <end position="411"/>
    </location>
</feature>
<comment type="similarity">
    <text evidence="1">Belongs to the CinA family.</text>
</comment>
<name>CINA_ALKMQ</name>
<keyword id="KW-1185">Reference proteome</keyword>
<accession>A6TNW2</accession>
<gene>
    <name evidence="1" type="primary">cinA</name>
    <name type="ordered locus">Amet_1704</name>
</gene>
<dbReference type="EMBL" id="CP000724">
    <property type="protein sequence ID" value="ABR47880.1"/>
    <property type="molecule type" value="Genomic_DNA"/>
</dbReference>
<dbReference type="RefSeq" id="WP_012062918.1">
    <property type="nucleotide sequence ID" value="NC_009633.1"/>
</dbReference>
<dbReference type="SMR" id="A6TNW2"/>
<dbReference type="STRING" id="293826.Amet_1704"/>
<dbReference type="KEGG" id="amt:Amet_1704"/>
<dbReference type="eggNOG" id="COG1058">
    <property type="taxonomic scope" value="Bacteria"/>
</dbReference>
<dbReference type="eggNOG" id="COG1546">
    <property type="taxonomic scope" value="Bacteria"/>
</dbReference>
<dbReference type="HOGENOM" id="CLU_030805_9_3_9"/>
<dbReference type="OrthoDB" id="9801454at2"/>
<dbReference type="Proteomes" id="UP000001572">
    <property type="component" value="Chromosome"/>
</dbReference>
<dbReference type="CDD" id="cd00885">
    <property type="entry name" value="cinA"/>
    <property type="match status" value="1"/>
</dbReference>
<dbReference type="Gene3D" id="3.30.70.2860">
    <property type="match status" value="1"/>
</dbReference>
<dbReference type="Gene3D" id="3.90.950.20">
    <property type="entry name" value="CinA-like"/>
    <property type="match status" value="1"/>
</dbReference>
<dbReference type="Gene3D" id="3.40.980.10">
    <property type="entry name" value="MoaB/Mog-like domain"/>
    <property type="match status" value="1"/>
</dbReference>
<dbReference type="HAMAP" id="MF_00226_B">
    <property type="entry name" value="CinA_B"/>
    <property type="match status" value="1"/>
</dbReference>
<dbReference type="InterPro" id="IPR050101">
    <property type="entry name" value="CinA"/>
</dbReference>
<dbReference type="InterPro" id="IPR036653">
    <property type="entry name" value="CinA-like_C"/>
</dbReference>
<dbReference type="InterPro" id="IPR008136">
    <property type="entry name" value="CinA_C"/>
</dbReference>
<dbReference type="InterPro" id="IPR041424">
    <property type="entry name" value="CinA_KH"/>
</dbReference>
<dbReference type="InterPro" id="IPR008135">
    <property type="entry name" value="Competence-induced_CinA"/>
</dbReference>
<dbReference type="InterPro" id="IPR036425">
    <property type="entry name" value="MoaB/Mog-like_dom_sf"/>
</dbReference>
<dbReference type="InterPro" id="IPR001453">
    <property type="entry name" value="MoaB/Mog_dom"/>
</dbReference>
<dbReference type="NCBIfam" id="TIGR00200">
    <property type="entry name" value="cinA_nterm"/>
    <property type="match status" value="1"/>
</dbReference>
<dbReference type="NCBIfam" id="TIGR00177">
    <property type="entry name" value="molyb_syn"/>
    <property type="match status" value="1"/>
</dbReference>
<dbReference type="NCBIfam" id="TIGR00199">
    <property type="entry name" value="PncC_domain"/>
    <property type="match status" value="1"/>
</dbReference>
<dbReference type="NCBIfam" id="NF001813">
    <property type="entry name" value="PRK00549.1"/>
    <property type="match status" value="1"/>
</dbReference>
<dbReference type="PANTHER" id="PTHR13939">
    <property type="entry name" value="NICOTINAMIDE-NUCLEOTIDE AMIDOHYDROLASE PNCC"/>
    <property type="match status" value="1"/>
</dbReference>
<dbReference type="PANTHER" id="PTHR13939:SF0">
    <property type="entry name" value="NMN AMIDOHYDROLASE-LIKE PROTEIN YFAY"/>
    <property type="match status" value="1"/>
</dbReference>
<dbReference type="Pfam" id="PF02464">
    <property type="entry name" value="CinA"/>
    <property type="match status" value="1"/>
</dbReference>
<dbReference type="Pfam" id="PF18146">
    <property type="entry name" value="CinA_KH"/>
    <property type="match status" value="1"/>
</dbReference>
<dbReference type="Pfam" id="PF00994">
    <property type="entry name" value="MoCF_biosynth"/>
    <property type="match status" value="1"/>
</dbReference>
<dbReference type="PIRSF" id="PIRSF006728">
    <property type="entry name" value="CinA"/>
    <property type="match status" value="1"/>
</dbReference>
<dbReference type="SMART" id="SM00852">
    <property type="entry name" value="MoCF_biosynth"/>
    <property type="match status" value="1"/>
</dbReference>
<dbReference type="SUPFAM" id="SSF142433">
    <property type="entry name" value="CinA-like"/>
    <property type="match status" value="1"/>
</dbReference>
<dbReference type="SUPFAM" id="SSF53218">
    <property type="entry name" value="Molybdenum cofactor biosynthesis proteins"/>
    <property type="match status" value="1"/>
</dbReference>
<sequence>MKAEILAIGTELLMGEIVNTNAQFLAEKLVDLGIYVYHQSVVGDNEERIMQAYELAFSRSDLLIVTGGLGPTKDDMTKEVAAKFFKRELVLHPESLEIMKTFFDARNLPLNEGNIKQAYFPIGAKILPNPNGTAPGCMVEEGGKTFILLPGPPREMIPMYENHVVPHLKPYQKNVLVSKVLHIVGIGEGHMVEKIEDIIDGQNNPTVAPYAKAKGLTLRITASGQNQSIAEGLIKPVQEAIQERLGEDVYGEGDITLEEVVAKKLIEKKQTIAIAESCTGGMLSGRLTNYPGISSVFMEAMITYSNEAKIKRLDVSPQTIENYGAVSEETAKEMAIGMARTANADIGLSVTGIAGPGGGTVDKPVGLVYIGLYLNGQMQAKKLIVSGDRQRVRKLTTTYALDFLRRQLMKV</sequence>
<protein>
    <recommendedName>
        <fullName evidence="1">Putative competence-damage inducible protein</fullName>
    </recommendedName>
</protein>
<reference key="1">
    <citation type="journal article" date="2016" name="Genome Announc.">
        <title>Complete genome sequence of Alkaliphilus metalliredigens strain QYMF, an alkaliphilic and metal-reducing bacterium isolated from borax-contaminated leachate ponds.</title>
        <authorList>
            <person name="Hwang C."/>
            <person name="Copeland A."/>
            <person name="Lucas S."/>
            <person name="Lapidus A."/>
            <person name="Barry K."/>
            <person name="Detter J.C."/>
            <person name="Glavina Del Rio T."/>
            <person name="Hammon N."/>
            <person name="Israni S."/>
            <person name="Dalin E."/>
            <person name="Tice H."/>
            <person name="Pitluck S."/>
            <person name="Chertkov O."/>
            <person name="Brettin T."/>
            <person name="Bruce D."/>
            <person name="Han C."/>
            <person name="Schmutz J."/>
            <person name="Larimer F."/>
            <person name="Land M.L."/>
            <person name="Hauser L."/>
            <person name="Kyrpides N."/>
            <person name="Mikhailova N."/>
            <person name="Ye Q."/>
            <person name="Zhou J."/>
            <person name="Richardson P."/>
            <person name="Fields M.W."/>
        </authorList>
    </citation>
    <scope>NUCLEOTIDE SEQUENCE [LARGE SCALE GENOMIC DNA]</scope>
    <source>
        <strain>QYMF</strain>
    </source>
</reference>
<organism>
    <name type="scientific">Alkaliphilus metalliredigens (strain QYMF)</name>
    <dbReference type="NCBI Taxonomy" id="293826"/>
    <lineage>
        <taxon>Bacteria</taxon>
        <taxon>Bacillati</taxon>
        <taxon>Bacillota</taxon>
        <taxon>Clostridia</taxon>
        <taxon>Peptostreptococcales</taxon>
        <taxon>Natronincolaceae</taxon>
        <taxon>Alkaliphilus</taxon>
    </lineage>
</organism>